<sequence length="281" mass="31810">MYLIEILKSIFFGIVEGITEWLPISSTGHLILAEEFIQYQNQNEAFMSMFNVVIQLGAILAVMVIYFNKLNPFKPTKDKQEVRKTWRLWLKVLIATLPLLGVFKFDDWFDTHFHNMVSVALMLIIYGVAFIYLEKRNKARAIEPSVTELDKLPYTTAFYIGLFQVLALLPGTSRSGATIVGGLLNGTSRSVVTEFTFYLGIPVMFGASALKIFKFVKAGELLSFGQLFLLLVAMGVAFAVSMVAIRFLTSYVKKHDFTLFGKYRIVLGSVLLLYSFVRLFV</sequence>
<keyword id="KW-0046">Antibiotic resistance</keyword>
<keyword id="KW-1003">Cell membrane</keyword>
<keyword id="KW-0133">Cell shape</keyword>
<keyword id="KW-0961">Cell wall biogenesis/degradation</keyword>
<keyword id="KW-0378">Hydrolase</keyword>
<keyword id="KW-0472">Membrane</keyword>
<keyword id="KW-0573">Peptidoglycan synthesis</keyword>
<keyword id="KW-0812">Transmembrane</keyword>
<keyword id="KW-1133">Transmembrane helix</keyword>
<comment type="function">
    <text evidence="1">Catalyzes the dephosphorylation of undecaprenyl diphosphate (UPP). Confers resistance to bacitracin.</text>
</comment>
<comment type="catalytic activity">
    <reaction evidence="1">
        <text>di-trans,octa-cis-undecaprenyl diphosphate + H2O = di-trans,octa-cis-undecaprenyl phosphate + phosphate + H(+)</text>
        <dbReference type="Rhea" id="RHEA:28094"/>
        <dbReference type="ChEBI" id="CHEBI:15377"/>
        <dbReference type="ChEBI" id="CHEBI:15378"/>
        <dbReference type="ChEBI" id="CHEBI:43474"/>
        <dbReference type="ChEBI" id="CHEBI:58405"/>
        <dbReference type="ChEBI" id="CHEBI:60392"/>
        <dbReference type="EC" id="3.6.1.27"/>
    </reaction>
</comment>
<comment type="subcellular location">
    <subcellularLocation>
        <location evidence="1">Cell membrane</location>
        <topology evidence="1">Multi-pass membrane protein</topology>
    </subcellularLocation>
</comment>
<comment type="miscellaneous">
    <text>Bacitracin is thought to be involved in the inhibition of peptidoglycan synthesis by sequestering undecaprenyl diphosphate, thereby reducing the pool of lipid carrier available.</text>
</comment>
<comment type="similarity">
    <text evidence="1">Belongs to the UppP family.</text>
</comment>
<organism>
    <name type="scientific">Streptococcus pneumoniae (strain Taiwan19F-14)</name>
    <dbReference type="NCBI Taxonomy" id="487213"/>
    <lineage>
        <taxon>Bacteria</taxon>
        <taxon>Bacillati</taxon>
        <taxon>Bacillota</taxon>
        <taxon>Bacilli</taxon>
        <taxon>Lactobacillales</taxon>
        <taxon>Streptococcaceae</taxon>
        <taxon>Streptococcus</taxon>
    </lineage>
</organism>
<proteinExistence type="inferred from homology"/>
<evidence type="ECO:0000255" key="1">
    <source>
        <dbReference type="HAMAP-Rule" id="MF_01006"/>
    </source>
</evidence>
<reference key="1">
    <citation type="journal article" date="2010" name="Genome Biol.">
        <title>Structure and dynamics of the pan-genome of Streptococcus pneumoniae and closely related species.</title>
        <authorList>
            <person name="Donati C."/>
            <person name="Hiller N.L."/>
            <person name="Tettelin H."/>
            <person name="Muzzi A."/>
            <person name="Croucher N.J."/>
            <person name="Angiuoli S.V."/>
            <person name="Oggioni M."/>
            <person name="Dunning Hotopp J.C."/>
            <person name="Hu F.Z."/>
            <person name="Riley D.R."/>
            <person name="Covacci A."/>
            <person name="Mitchell T.J."/>
            <person name="Bentley S.D."/>
            <person name="Kilian M."/>
            <person name="Ehrlich G.D."/>
            <person name="Rappuoli R."/>
            <person name="Moxon E.R."/>
            <person name="Masignani V."/>
        </authorList>
    </citation>
    <scope>NUCLEOTIDE SEQUENCE [LARGE SCALE GENOMIC DNA]</scope>
    <source>
        <strain>Taiwan19F-14</strain>
    </source>
</reference>
<name>UPPP_STRZT</name>
<feature type="chain" id="PRO_1000148832" description="Undecaprenyl-diphosphatase">
    <location>
        <begin position="1"/>
        <end position="281"/>
    </location>
</feature>
<feature type="transmembrane region" description="Helical" evidence="1">
    <location>
        <begin position="4"/>
        <end position="24"/>
    </location>
</feature>
<feature type="transmembrane region" description="Helical" evidence="1">
    <location>
        <begin position="45"/>
        <end position="65"/>
    </location>
</feature>
<feature type="transmembrane region" description="Helical" evidence="1">
    <location>
        <begin position="89"/>
        <end position="109"/>
    </location>
</feature>
<feature type="transmembrane region" description="Helical" evidence="1">
    <location>
        <begin position="113"/>
        <end position="133"/>
    </location>
</feature>
<feature type="transmembrane region" description="Helical" evidence="1">
    <location>
        <begin position="152"/>
        <end position="172"/>
    </location>
</feature>
<feature type="transmembrane region" description="Helical" evidence="1">
    <location>
        <begin position="190"/>
        <end position="210"/>
    </location>
</feature>
<feature type="transmembrane region" description="Helical" evidence="1">
    <location>
        <begin position="225"/>
        <end position="245"/>
    </location>
</feature>
<feature type="transmembrane region" description="Helical" evidence="1">
    <location>
        <begin position="257"/>
        <end position="277"/>
    </location>
</feature>
<dbReference type="EC" id="3.6.1.27" evidence="1"/>
<dbReference type="EMBL" id="CP000921">
    <property type="protein sequence ID" value="ACO22382.1"/>
    <property type="molecule type" value="Genomic_DNA"/>
</dbReference>
<dbReference type="RefSeq" id="WP_000280773.1">
    <property type="nucleotide sequence ID" value="NC_012469.1"/>
</dbReference>
<dbReference type="SMR" id="C1CPW6"/>
<dbReference type="KEGG" id="snt:SPT_0495"/>
<dbReference type="HOGENOM" id="CLU_060296_2_0_9"/>
<dbReference type="GO" id="GO:0005886">
    <property type="term" value="C:plasma membrane"/>
    <property type="evidence" value="ECO:0007669"/>
    <property type="project" value="UniProtKB-SubCell"/>
</dbReference>
<dbReference type="GO" id="GO:0050380">
    <property type="term" value="F:undecaprenyl-diphosphatase activity"/>
    <property type="evidence" value="ECO:0007669"/>
    <property type="project" value="UniProtKB-UniRule"/>
</dbReference>
<dbReference type="GO" id="GO:0071555">
    <property type="term" value="P:cell wall organization"/>
    <property type="evidence" value="ECO:0007669"/>
    <property type="project" value="UniProtKB-KW"/>
</dbReference>
<dbReference type="GO" id="GO:0009252">
    <property type="term" value="P:peptidoglycan biosynthetic process"/>
    <property type="evidence" value="ECO:0007669"/>
    <property type="project" value="UniProtKB-KW"/>
</dbReference>
<dbReference type="GO" id="GO:0008360">
    <property type="term" value="P:regulation of cell shape"/>
    <property type="evidence" value="ECO:0007669"/>
    <property type="project" value="UniProtKB-KW"/>
</dbReference>
<dbReference type="GO" id="GO:0046677">
    <property type="term" value="P:response to antibiotic"/>
    <property type="evidence" value="ECO:0007669"/>
    <property type="project" value="UniProtKB-UniRule"/>
</dbReference>
<dbReference type="HAMAP" id="MF_01006">
    <property type="entry name" value="Undec_diphosphatase"/>
    <property type="match status" value="1"/>
</dbReference>
<dbReference type="InterPro" id="IPR003824">
    <property type="entry name" value="UppP"/>
</dbReference>
<dbReference type="NCBIfam" id="NF001391">
    <property type="entry name" value="PRK00281.1-5"/>
    <property type="match status" value="1"/>
</dbReference>
<dbReference type="PANTHER" id="PTHR30622">
    <property type="entry name" value="UNDECAPRENYL-DIPHOSPHATASE"/>
    <property type="match status" value="1"/>
</dbReference>
<dbReference type="PANTHER" id="PTHR30622:SF3">
    <property type="entry name" value="UNDECAPRENYL-DIPHOSPHATASE"/>
    <property type="match status" value="1"/>
</dbReference>
<dbReference type="Pfam" id="PF02673">
    <property type="entry name" value="BacA"/>
    <property type="match status" value="1"/>
</dbReference>
<accession>C1CPW6</accession>
<protein>
    <recommendedName>
        <fullName evidence="1">Undecaprenyl-diphosphatase</fullName>
        <ecNumber evidence="1">3.6.1.27</ecNumber>
    </recommendedName>
    <alternativeName>
        <fullName evidence="1">Bacitracin resistance protein</fullName>
    </alternativeName>
    <alternativeName>
        <fullName evidence="1">Undecaprenyl pyrophosphate phosphatase</fullName>
    </alternativeName>
</protein>
<gene>
    <name evidence="1" type="primary">uppP</name>
    <name type="ordered locus">SPT_0495</name>
</gene>